<accession>A8AW99</accession>
<proteinExistence type="inferred from homology"/>
<name>CAPP_STRGC</name>
<comment type="function">
    <text evidence="1">Forms oxaloacetate, a four-carbon dicarboxylic acid source for the tricarboxylic acid cycle.</text>
</comment>
<comment type="catalytic activity">
    <reaction evidence="1">
        <text>oxaloacetate + phosphate = phosphoenolpyruvate + hydrogencarbonate</text>
        <dbReference type="Rhea" id="RHEA:28370"/>
        <dbReference type="ChEBI" id="CHEBI:16452"/>
        <dbReference type="ChEBI" id="CHEBI:17544"/>
        <dbReference type="ChEBI" id="CHEBI:43474"/>
        <dbReference type="ChEBI" id="CHEBI:58702"/>
        <dbReference type="EC" id="4.1.1.31"/>
    </reaction>
</comment>
<comment type="cofactor">
    <cofactor evidence="1">
        <name>Mg(2+)</name>
        <dbReference type="ChEBI" id="CHEBI:18420"/>
    </cofactor>
</comment>
<comment type="similarity">
    <text evidence="1">Belongs to the PEPCase type 1 family.</text>
</comment>
<protein>
    <recommendedName>
        <fullName evidence="1">Phosphoenolpyruvate carboxylase</fullName>
        <shortName evidence="1">PEPC</shortName>
        <shortName evidence="1">PEPCase</shortName>
        <ecNumber evidence="1">4.1.1.31</ecNumber>
    </recommendedName>
</protein>
<gene>
    <name evidence="1" type="primary">ppc</name>
    <name type="ordered locus">SGO_0760</name>
</gene>
<sequence length="948" mass="108837">MSFNKLESFSNKEVIREEVSILTDLLTDVTRKILSPETFEKIAMMEDLAVHSKYQELKEIVEELTTEEMVYISRYFSILPLLINISEDVDLAYEINHQNNIDQDYLGKLSTTIDLISTRENAKEILENLNVVPVLTAHPTQVQRKTMLDLTNHIHTLLRQHRDVKAGLVNEKKWLGNLRRYIELMMQTDMIRDKKLKVTNEITNVMEYYNSSFLQAITNFMVEYKRLAEERGIKLDNPKPITMGMWIGGDRDGNPFVTAETLKLSATLQSEVILNYYIDKVYTLYRTFSLSTNLSETSQAVAEMAALSTDKSVYRENEPYRRAFHYIQSKLIQTLLYLKEGNFSNEGQRLTDRAEKTLSAKTTPSLSNKGREIIPNYIQSRISETLTELKKEETPSYKTAKEFKEDLQVIYDSLIEHHGEALVTGDLTELLQAVDVFGFFLASIDMRQDSSVHEACVAELLASANIVKDYSSLSEEEKCQVLLKQLLEDPRILSATHEPKSELLQKELEIFKTARQLKDALGEEVIKQNIISHSTSVSDLLELAIMLKEVGLIDENGTRVQIVPLFETIEDLDNSCETMEKYLSLPIAQKWIASKNNYQEIMLGYSDSNKDGGYLSSCWTLYKAQQQLTAIGDKFGVKITFFHGRGGTVGRGGGPTYEAITSQPLRSINDRIRLTEQGEVIGNKYGNKDAAYYNLEMLVSAAINRMVTHKKSDAHTSNKYERIMDQVVERSYQIYRDLVFGDERFYDYFFESSPIKAISSFNIGSRPAARKTITEIGGLRAIPWVFSWSQSRVMFPGWYGVGSSFKEFIDQDPENNLAFLQLMYKRWPFFKSLLSNVDMVLSKSNMNIAFEYAQLCEDQNVRDIFNIILDEWQLTKNVILEIEGHDELLAENTYLRDSLDYRMPYFNVLNYIQLELIKRQRNGQLTPDQEKLIHITINGIATGLRNSG</sequence>
<evidence type="ECO:0000255" key="1">
    <source>
        <dbReference type="HAMAP-Rule" id="MF_00595"/>
    </source>
</evidence>
<feature type="chain" id="PRO_1000082437" description="Phosphoenolpyruvate carboxylase">
    <location>
        <begin position="1"/>
        <end position="948"/>
    </location>
</feature>
<feature type="active site" evidence="1">
    <location>
        <position position="138"/>
    </location>
</feature>
<feature type="active site" evidence="1">
    <location>
        <position position="610"/>
    </location>
</feature>
<dbReference type="EC" id="4.1.1.31" evidence="1"/>
<dbReference type="EMBL" id="CP000725">
    <property type="protein sequence ID" value="ABV09428.1"/>
    <property type="molecule type" value="Genomic_DNA"/>
</dbReference>
<dbReference type="RefSeq" id="WP_012000224.1">
    <property type="nucleotide sequence ID" value="NC_009785.1"/>
</dbReference>
<dbReference type="SMR" id="A8AW99"/>
<dbReference type="STRING" id="467705.SGO_0760"/>
<dbReference type="KEGG" id="sgo:SGO_0760"/>
<dbReference type="eggNOG" id="COG2352">
    <property type="taxonomic scope" value="Bacteria"/>
</dbReference>
<dbReference type="HOGENOM" id="CLU_006557_2_0_9"/>
<dbReference type="Proteomes" id="UP000001131">
    <property type="component" value="Chromosome"/>
</dbReference>
<dbReference type="GO" id="GO:0005829">
    <property type="term" value="C:cytosol"/>
    <property type="evidence" value="ECO:0007669"/>
    <property type="project" value="TreeGrafter"/>
</dbReference>
<dbReference type="GO" id="GO:0000287">
    <property type="term" value="F:magnesium ion binding"/>
    <property type="evidence" value="ECO:0007669"/>
    <property type="project" value="UniProtKB-UniRule"/>
</dbReference>
<dbReference type="GO" id="GO:0008964">
    <property type="term" value="F:phosphoenolpyruvate carboxylase activity"/>
    <property type="evidence" value="ECO:0007669"/>
    <property type="project" value="UniProtKB-UniRule"/>
</dbReference>
<dbReference type="GO" id="GO:0015977">
    <property type="term" value="P:carbon fixation"/>
    <property type="evidence" value="ECO:0007669"/>
    <property type="project" value="UniProtKB-UniRule"/>
</dbReference>
<dbReference type="GO" id="GO:0006107">
    <property type="term" value="P:oxaloacetate metabolic process"/>
    <property type="evidence" value="ECO:0007669"/>
    <property type="project" value="UniProtKB-UniRule"/>
</dbReference>
<dbReference type="GO" id="GO:0006099">
    <property type="term" value="P:tricarboxylic acid cycle"/>
    <property type="evidence" value="ECO:0007669"/>
    <property type="project" value="InterPro"/>
</dbReference>
<dbReference type="Gene3D" id="1.20.1440.90">
    <property type="entry name" value="Phosphoenolpyruvate/pyruvate domain"/>
    <property type="match status" value="1"/>
</dbReference>
<dbReference type="HAMAP" id="MF_00595">
    <property type="entry name" value="PEPcase_type1"/>
    <property type="match status" value="1"/>
</dbReference>
<dbReference type="InterPro" id="IPR021135">
    <property type="entry name" value="PEP_COase"/>
</dbReference>
<dbReference type="InterPro" id="IPR022805">
    <property type="entry name" value="PEP_COase_bac/pln-type"/>
</dbReference>
<dbReference type="InterPro" id="IPR018129">
    <property type="entry name" value="PEP_COase_Lys_AS"/>
</dbReference>
<dbReference type="InterPro" id="IPR033129">
    <property type="entry name" value="PEPCASE_His_AS"/>
</dbReference>
<dbReference type="InterPro" id="IPR015813">
    <property type="entry name" value="Pyrv/PenolPyrv_kinase-like_dom"/>
</dbReference>
<dbReference type="NCBIfam" id="NF000584">
    <property type="entry name" value="PRK00009.1"/>
    <property type="match status" value="1"/>
</dbReference>
<dbReference type="PANTHER" id="PTHR30523">
    <property type="entry name" value="PHOSPHOENOLPYRUVATE CARBOXYLASE"/>
    <property type="match status" value="1"/>
</dbReference>
<dbReference type="PANTHER" id="PTHR30523:SF6">
    <property type="entry name" value="PHOSPHOENOLPYRUVATE CARBOXYLASE"/>
    <property type="match status" value="1"/>
</dbReference>
<dbReference type="Pfam" id="PF00311">
    <property type="entry name" value="PEPcase"/>
    <property type="match status" value="1"/>
</dbReference>
<dbReference type="PRINTS" id="PR00150">
    <property type="entry name" value="PEPCARBXLASE"/>
</dbReference>
<dbReference type="SUPFAM" id="SSF51621">
    <property type="entry name" value="Phosphoenolpyruvate/pyruvate domain"/>
    <property type="match status" value="1"/>
</dbReference>
<dbReference type="PROSITE" id="PS00781">
    <property type="entry name" value="PEPCASE_1"/>
    <property type="match status" value="1"/>
</dbReference>
<dbReference type="PROSITE" id="PS00393">
    <property type="entry name" value="PEPCASE_2"/>
    <property type="match status" value="1"/>
</dbReference>
<reference key="1">
    <citation type="journal article" date="2007" name="J. Bacteriol.">
        <title>Genome-wide transcriptional changes in Streptococcus gordonii in response to competence signaling peptide.</title>
        <authorList>
            <person name="Vickerman M.M."/>
            <person name="Iobst S."/>
            <person name="Jesionowski A.M."/>
            <person name="Gill S.R."/>
        </authorList>
    </citation>
    <scope>NUCLEOTIDE SEQUENCE [LARGE SCALE GENOMIC DNA]</scope>
    <source>
        <strain>Challis / ATCC 35105 / BCRC 15272 / CH1 / DL1 / V288</strain>
    </source>
</reference>
<organism>
    <name type="scientific">Streptococcus gordonii (strain Challis / ATCC 35105 / BCRC 15272 / CH1 / DL1 / V288)</name>
    <dbReference type="NCBI Taxonomy" id="467705"/>
    <lineage>
        <taxon>Bacteria</taxon>
        <taxon>Bacillati</taxon>
        <taxon>Bacillota</taxon>
        <taxon>Bacilli</taxon>
        <taxon>Lactobacillales</taxon>
        <taxon>Streptococcaceae</taxon>
        <taxon>Streptococcus</taxon>
    </lineage>
</organism>
<keyword id="KW-0120">Carbon dioxide fixation</keyword>
<keyword id="KW-0456">Lyase</keyword>
<keyword id="KW-0460">Magnesium</keyword>
<keyword id="KW-1185">Reference proteome</keyword>